<proteinExistence type="inferred from homology"/>
<sequence>MAVISMKQLLEAGVHFGHQTRRWNPKMKKYIFTERNGIYIIDLQKTVKKVDEAYNFLKQVSEDGGQVLFVGTKKQAQESVKSEAERAGQFYINQRWLGGLLTNYKTISKRIKRISEIEKMEEDGLFEVLPKKEVVELKKEYDRLIKFLGGIRDMKSMPQALFVVDPRKERNAIAEARKLNIPIVGIVDTNCDPDEIDYVIPANDDAIRAVKLLTAKMADAILEGQQGVSNEEVAAEQNIDLDEKEKSEETEATEE</sequence>
<gene>
    <name evidence="1" type="primary">rpsB</name>
    <name type="ordered locus">SAR1232</name>
</gene>
<feature type="chain" id="PRO_0000134241" description="Small ribosomal subunit protein uS2">
    <location>
        <begin position="1"/>
        <end position="255"/>
    </location>
</feature>
<feature type="region of interest" description="Disordered" evidence="2">
    <location>
        <begin position="226"/>
        <end position="255"/>
    </location>
</feature>
<organism>
    <name type="scientific">Staphylococcus aureus (strain MRSA252)</name>
    <dbReference type="NCBI Taxonomy" id="282458"/>
    <lineage>
        <taxon>Bacteria</taxon>
        <taxon>Bacillati</taxon>
        <taxon>Bacillota</taxon>
        <taxon>Bacilli</taxon>
        <taxon>Bacillales</taxon>
        <taxon>Staphylococcaceae</taxon>
        <taxon>Staphylococcus</taxon>
    </lineage>
</organism>
<reference key="1">
    <citation type="journal article" date="2004" name="Proc. Natl. Acad. Sci. U.S.A.">
        <title>Complete genomes of two clinical Staphylococcus aureus strains: evidence for the rapid evolution of virulence and drug resistance.</title>
        <authorList>
            <person name="Holden M.T.G."/>
            <person name="Feil E.J."/>
            <person name="Lindsay J.A."/>
            <person name="Peacock S.J."/>
            <person name="Day N.P.J."/>
            <person name="Enright M.C."/>
            <person name="Foster T.J."/>
            <person name="Moore C.E."/>
            <person name="Hurst L."/>
            <person name="Atkin R."/>
            <person name="Barron A."/>
            <person name="Bason N."/>
            <person name="Bentley S.D."/>
            <person name="Chillingworth C."/>
            <person name="Chillingworth T."/>
            <person name="Churcher C."/>
            <person name="Clark L."/>
            <person name="Corton C."/>
            <person name="Cronin A."/>
            <person name="Doggett J."/>
            <person name="Dowd L."/>
            <person name="Feltwell T."/>
            <person name="Hance Z."/>
            <person name="Harris B."/>
            <person name="Hauser H."/>
            <person name="Holroyd S."/>
            <person name="Jagels K."/>
            <person name="James K.D."/>
            <person name="Lennard N."/>
            <person name="Line A."/>
            <person name="Mayes R."/>
            <person name="Moule S."/>
            <person name="Mungall K."/>
            <person name="Ormond D."/>
            <person name="Quail M.A."/>
            <person name="Rabbinowitsch E."/>
            <person name="Rutherford K.M."/>
            <person name="Sanders M."/>
            <person name="Sharp S."/>
            <person name="Simmonds M."/>
            <person name="Stevens K."/>
            <person name="Whitehead S."/>
            <person name="Barrell B.G."/>
            <person name="Spratt B.G."/>
            <person name="Parkhill J."/>
        </authorList>
    </citation>
    <scope>NUCLEOTIDE SEQUENCE [LARGE SCALE GENOMIC DNA]</scope>
    <source>
        <strain>MRSA252</strain>
    </source>
</reference>
<dbReference type="EMBL" id="BX571856">
    <property type="protein sequence ID" value="CAG40234.1"/>
    <property type="molecule type" value="Genomic_DNA"/>
</dbReference>
<dbReference type="RefSeq" id="WP_000268484.1">
    <property type="nucleotide sequence ID" value="NC_002952.2"/>
</dbReference>
<dbReference type="SMR" id="Q6GHH9"/>
<dbReference type="GeneID" id="98345571"/>
<dbReference type="KEGG" id="sar:SAR1232"/>
<dbReference type="HOGENOM" id="CLU_040318_1_2_9"/>
<dbReference type="Proteomes" id="UP000000596">
    <property type="component" value="Chromosome"/>
</dbReference>
<dbReference type="GO" id="GO:0022627">
    <property type="term" value="C:cytosolic small ribosomal subunit"/>
    <property type="evidence" value="ECO:0007669"/>
    <property type="project" value="TreeGrafter"/>
</dbReference>
<dbReference type="GO" id="GO:0003735">
    <property type="term" value="F:structural constituent of ribosome"/>
    <property type="evidence" value="ECO:0007669"/>
    <property type="project" value="InterPro"/>
</dbReference>
<dbReference type="GO" id="GO:0006412">
    <property type="term" value="P:translation"/>
    <property type="evidence" value="ECO:0007669"/>
    <property type="project" value="UniProtKB-UniRule"/>
</dbReference>
<dbReference type="CDD" id="cd01425">
    <property type="entry name" value="RPS2"/>
    <property type="match status" value="1"/>
</dbReference>
<dbReference type="FunFam" id="1.10.287.610:FF:000001">
    <property type="entry name" value="30S ribosomal protein S2"/>
    <property type="match status" value="1"/>
</dbReference>
<dbReference type="Gene3D" id="3.40.50.10490">
    <property type="entry name" value="Glucose-6-phosphate isomerase like protein, domain 1"/>
    <property type="match status" value="1"/>
</dbReference>
<dbReference type="Gene3D" id="1.10.287.610">
    <property type="entry name" value="Helix hairpin bin"/>
    <property type="match status" value="1"/>
</dbReference>
<dbReference type="HAMAP" id="MF_00291_B">
    <property type="entry name" value="Ribosomal_uS2_B"/>
    <property type="match status" value="1"/>
</dbReference>
<dbReference type="InterPro" id="IPR001865">
    <property type="entry name" value="Ribosomal_uS2"/>
</dbReference>
<dbReference type="InterPro" id="IPR005706">
    <property type="entry name" value="Ribosomal_uS2_bac/mit/plastid"/>
</dbReference>
<dbReference type="InterPro" id="IPR018130">
    <property type="entry name" value="Ribosomal_uS2_CS"/>
</dbReference>
<dbReference type="InterPro" id="IPR023591">
    <property type="entry name" value="Ribosomal_uS2_flav_dom_sf"/>
</dbReference>
<dbReference type="NCBIfam" id="TIGR01011">
    <property type="entry name" value="rpsB_bact"/>
    <property type="match status" value="1"/>
</dbReference>
<dbReference type="PANTHER" id="PTHR12534">
    <property type="entry name" value="30S RIBOSOMAL PROTEIN S2 PROKARYOTIC AND ORGANELLAR"/>
    <property type="match status" value="1"/>
</dbReference>
<dbReference type="PANTHER" id="PTHR12534:SF0">
    <property type="entry name" value="SMALL RIBOSOMAL SUBUNIT PROTEIN US2M"/>
    <property type="match status" value="1"/>
</dbReference>
<dbReference type="Pfam" id="PF00318">
    <property type="entry name" value="Ribosomal_S2"/>
    <property type="match status" value="1"/>
</dbReference>
<dbReference type="PRINTS" id="PR00395">
    <property type="entry name" value="RIBOSOMALS2"/>
</dbReference>
<dbReference type="SUPFAM" id="SSF52313">
    <property type="entry name" value="Ribosomal protein S2"/>
    <property type="match status" value="1"/>
</dbReference>
<dbReference type="PROSITE" id="PS00962">
    <property type="entry name" value="RIBOSOMAL_S2_1"/>
    <property type="match status" value="1"/>
</dbReference>
<dbReference type="PROSITE" id="PS00963">
    <property type="entry name" value="RIBOSOMAL_S2_2"/>
    <property type="match status" value="1"/>
</dbReference>
<protein>
    <recommendedName>
        <fullName evidence="1">Small ribosomal subunit protein uS2</fullName>
    </recommendedName>
    <alternativeName>
        <fullName evidence="3">30S ribosomal protein S2</fullName>
    </alternativeName>
</protein>
<name>RS2_STAAR</name>
<evidence type="ECO:0000255" key="1">
    <source>
        <dbReference type="HAMAP-Rule" id="MF_00291"/>
    </source>
</evidence>
<evidence type="ECO:0000256" key="2">
    <source>
        <dbReference type="SAM" id="MobiDB-lite"/>
    </source>
</evidence>
<evidence type="ECO:0000305" key="3"/>
<comment type="similarity">
    <text evidence="1">Belongs to the universal ribosomal protein uS2 family.</text>
</comment>
<accession>Q6GHH9</accession>
<keyword id="KW-0687">Ribonucleoprotein</keyword>
<keyword id="KW-0689">Ribosomal protein</keyword>